<proteinExistence type="inferred from homology"/>
<protein>
    <recommendedName>
        <fullName>Probable ABC transporter permease protein YurM</fullName>
    </recommendedName>
</protein>
<sequence length="300" mass="34154">MLPQKKTDSFRLEPVPDQHIEVKDKPRRKWYIGETSVWVFLFLYLIAIAYPLLWMVMSAFKNSDDIFEHSWSLPSSWHPENFVSAWNQGISSYFMNSVIVTALTCVITVFISAWAAYGLSRFEFKGKGFFLVLCLGGLMLTPQVSLVPLYSIIQSLGLYNTYWALILPYAAYRIPFTIILIRSYFLSISKELEEAAYLDGCTSFGVFFRIFLPMSVPILVTSGILTAYHTWNEFMFAIIFIDDENLRTIPAGLMQFRDALQTDWGVLLAGLTISAAPIIILFLLMQKYFVRGIASGSVKG</sequence>
<accession>O32154</accession>
<dbReference type="EMBL" id="AL009126">
    <property type="protein sequence ID" value="CAB15248.1"/>
    <property type="molecule type" value="Genomic_DNA"/>
</dbReference>
<dbReference type="PIR" id="D70018">
    <property type="entry name" value="D70018"/>
</dbReference>
<dbReference type="RefSeq" id="WP_003228625.1">
    <property type="nucleotide sequence ID" value="NZ_OZ025638.1"/>
</dbReference>
<dbReference type="SMR" id="O32154"/>
<dbReference type="FunCoup" id="O32154">
    <property type="interactions" value="203"/>
</dbReference>
<dbReference type="STRING" id="224308.BSU32580"/>
<dbReference type="PaxDb" id="224308-BSU32580"/>
<dbReference type="EnsemblBacteria" id="CAB15248">
    <property type="protein sequence ID" value="CAB15248"/>
    <property type="gene ID" value="BSU_32580"/>
</dbReference>
<dbReference type="GeneID" id="936696"/>
<dbReference type="KEGG" id="bsu:BSU32580"/>
<dbReference type="PATRIC" id="fig|224308.179.peg.3528"/>
<dbReference type="eggNOG" id="COG0395">
    <property type="taxonomic scope" value="Bacteria"/>
</dbReference>
<dbReference type="InParanoid" id="O32154"/>
<dbReference type="OrthoDB" id="187395at2"/>
<dbReference type="PhylomeDB" id="O32154"/>
<dbReference type="BioCyc" id="BSUB:BSU32580-MONOMER"/>
<dbReference type="Proteomes" id="UP000001570">
    <property type="component" value="Chromosome"/>
</dbReference>
<dbReference type="GO" id="GO:0005886">
    <property type="term" value="C:plasma membrane"/>
    <property type="evidence" value="ECO:0007669"/>
    <property type="project" value="UniProtKB-SubCell"/>
</dbReference>
<dbReference type="GO" id="GO:0055085">
    <property type="term" value="P:transmembrane transport"/>
    <property type="evidence" value="ECO:0007669"/>
    <property type="project" value="InterPro"/>
</dbReference>
<dbReference type="CDD" id="cd06261">
    <property type="entry name" value="TM_PBP2"/>
    <property type="match status" value="1"/>
</dbReference>
<dbReference type="Gene3D" id="1.10.3720.10">
    <property type="entry name" value="MetI-like"/>
    <property type="match status" value="1"/>
</dbReference>
<dbReference type="InterPro" id="IPR000515">
    <property type="entry name" value="MetI-like"/>
</dbReference>
<dbReference type="InterPro" id="IPR035906">
    <property type="entry name" value="MetI-like_sf"/>
</dbReference>
<dbReference type="PANTHER" id="PTHR43744">
    <property type="entry name" value="ABC TRANSPORTER PERMEASE PROTEIN MG189-RELATED-RELATED"/>
    <property type="match status" value="1"/>
</dbReference>
<dbReference type="PANTHER" id="PTHR43744:SF8">
    <property type="entry name" value="SN-GLYCEROL-3-PHOSPHATE TRANSPORT SYSTEM PERMEASE PROTEIN UGPE"/>
    <property type="match status" value="1"/>
</dbReference>
<dbReference type="Pfam" id="PF00528">
    <property type="entry name" value="BPD_transp_1"/>
    <property type="match status" value="1"/>
</dbReference>
<dbReference type="SUPFAM" id="SSF161098">
    <property type="entry name" value="MetI-like"/>
    <property type="match status" value="1"/>
</dbReference>
<dbReference type="PROSITE" id="PS50928">
    <property type="entry name" value="ABC_TM1"/>
    <property type="match status" value="1"/>
</dbReference>
<keyword id="KW-1003">Cell membrane</keyword>
<keyword id="KW-0472">Membrane</keyword>
<keyword id="KW-1185">Reference proteome</keyword>
<keyword id="KW-0812">Transmembrane</keyword>
<keyword id="KW-1133">Transmembrane helix</keyword>
<keyword id="KW-0813">Transport</keyword>
<comment type="function">
    <text>Probably part of the binding-protein-dependent transport system YurMNO. Probably responsible for the translocation of the substrate across the membrane.</text>
</comment>
<comment type="subcellular location">
    <subcellularLocation>
        <location evidence="2">Cell membrane</location>
        <topology evidence="1">Multi-pass membrane protein</topology>
    </subcellularLocation>
</comment>
<comment type="similarity">
    <text evidence="2">Belongs to the binding-protein-dependent transport system permease family. MalFG subfamily.</text>
</comment>
<reference key="1">
    <citation type="journal article" date="1997" name="Nature">
        <title>The complete genome sequence of the Gram-positive bacterium Bacillus subtilis.</title>
        <authorList>
            <person name="Kunst F."/>
            <person name="Ogasawara N."/>
            <person name="Moszer I."/>
            <person name="Albertini A.M."/>
            <person name="Alloni G."/>
            <person name="Azevedo V."/>
            <person name="Bertero M.G."/>
            <person name="Bessieres P."/>
            <person name="Bolotin A."/>
            <person name="Borchert S."/>
            <person name="Borriss R."/>
            <person name="Boursier L."/>
            <person name="Brans A."/>
            <person name="Braun M."/>
            <person name="Brignell S.C."/>
            <person name="Bron S."/>
            <person name="Brouillet S."/>
            <person name="Bruschi C.V."/>
            <person name="Caldwell B."/>
            <person name="Capuano V."/>
            <person name="Carter N.M."/>
            <person name="Choi S.-K."/>
            <person name="Codani J.-J."/>
            <person name="Connerton I.F."/>
            <person name="Cummings N.J."/>
            <person name="Daniel R.A."/>
            <person name="Denizot F."/>
            <person name="Devine K.M."/>
            <person name="Duesterhoeft A."/>
            <person name="Ehrlich S.D."/>
            <person name="Emmerson P.T."/>
            <person name="Entian K.-D."/>
            <person name="Errington J."/>
            <person name="Fabret C."/>
            <person name="Ferrari E."/>
            <person name="Foulger D."/>
            <person name="Fritz C."/>
            <person name="Fujita M."/>
            <person name="Fujita Y."/>
            <person name="Fuma S."/>
            <person name="Galizzi A."/>
            <person name="Galleron N."/>
            <person name="Ghim S.-Y."/>
            <person name="Glaser P."/>
            <person name="Goffeau A."/>
            <person name="Golightly E.J."/>
            <person name="Grandi G."/>
            <person name="Guiseppi G."/>
            <person name="Guy B.J."/>
            <person name="Haga K."/>
            <person name="Haiech J."/>
            <person name="Harwood C.R."/>
            <person name="Henaut A."/>
            <person name="Hilbert H."/>
            <person name="Holsappel S."/>
            <person name="Hosono S."/>
            <person name="Hullo M.-F."/>
            <person name="Itaya M."/>
            <person name="Jones L.-M."/>
            <person name="Joris B."/>
            <person name="Karamata D."/>
            <person name="Kasahara Y."/>
            <person name="Klaerr-Blanchard M."/>
            <person name="Klein C."/>
            <person name="Kobayashi Y."/>
            <person name="Koetter P."/>
            <person name="Koningstein G."/>
            <person name="Krogh S."/>
            <person name="Kumano M."/>
            <person name="Kurita K."/>
            <person name="Lapidus A."/>
            <person name="Lardinois S."/>
            <person name="Lauber J."/>
            <person name="Lazarevic V."/>
            <person name="Lee S.-M."/>
            <person name="Levine A."/>
            <person name="Liu H."/>
            <person name="Masuda S."/>
            <person name="Mauel C."/>
            <person name="Medigue C."/>
            <person name="Medina N."/>
            <person name="Mellado R.P."/>
            <person name="Mizuno M."/>
            <person name="Moestl D."/>
            <person name="Nakai S."/>
            <person name="Noback M."/>
            <person name="Noone D."/>
            <person name="O'Reilly M."/>
            <person name="Ogawa K."/>
            <person name="Ogiwara A."/>
            <person name="Oudega B."/>
            <person name="Park S.-H."/>
            <person name="Parro V."/>
            <person name="Pohl T.M."/>
            <person name="Portetelle D."/>
            <person name="Porwollik S."/>
            <person name="Prescott A.M."/>
            <person name="Presecan E."/>
            <person name="Pujic P."/>
            <person name="Purnelle B."/>
            <person name="Rapoport G."/>
            <person name="Rey M."/>
            <person name="Reynolds S."/>
            <person name="Rieger M."/>
            <person name="Rivolta C."/>
            <person name="Rocha E."/>
            <person name="Roche B."/>
            <person name="Rose M."/>
            <person name="Sadaie Y."/>
            <person name="Sato T."/>
            <person name="Scanlan E."/>
            <person name="Schleich S."/>
            <person name="Schroeter R."/>
            <person name="Scoffone F."/>
            <person name="Sekiguchi J."/>
            <person name="Sekowska A."/>
            <person name="Seror S.J."/>
            <person name="Serror P."/>
            <person name="Shin B.-S."/>
            <person name="Soldo B."/>
            <person name="Sorokin A."/>
            <person name="Tacconi E."/>
            <person name="Takagi T."/>
            <person name="Takahashi H."/>
            <person name="Takemaru K."/>
            <person name="Takeuchi M."/>
            <person name="Tamakoshi A."/>
            <person name="Tanaka T."/>
            <person name="Terpstra P."/>
            <person name="Tognoni A."/>
            <person name="Tosato V."/>
            <person name="Uchiyama S."/>
            <person name="Vandenbol M."/>
            <person name="Vannier F."/>
            <person name="Vassarotti A."/>
            <person name="Viari A."/>
            <person name="Wambutt R."/>
            <person name="Wedler E."/>
            <person name="Wedler H."/>
            <person name="Weitzenegger T."/>
            <person name="Winters P."/>
            <person name="Wipat A."/>
            <person name="Yamamoto H."/>
            <person name="Yamane K."/>
            <person name="Yasumoto K."/>
            <person name="Yata K."/>
            <person name="Yoshida K."/>
            <person name="Yoshikawa H.-F."/>
            <person name="Zumstein E."/>
            <person name="Yoshikawa H."/>
            <person name="Danchin A."/>
        </authorList>
    </citation>
    <scope>NUCLEOTIDE SEQUENCE [LARGE SCALE GENOMIC DNA]</scope>
    <source>
        <strain>168</strain>
    </source>
</reference>
<evidence type="ECO:0000255" key="1">
    <source>
        <dbReference type="PROSITE-ProRule" id="PRU00441"/>
    </source>
</evidence>
<evidence type="ECO:0000305" key="2"/>
<organism>
    <name type="scientific">Bacillus subtilis (strain 168)</name>
    <dbReference type="NCBI Taxonomy" id="224308"/>
    <lineage>
        <taxon>Bacteria</taxon>
        <taxon>Bacillati</taxon>
        <taxon>Bacillota</taxon>
        <taxon>Bacilli</taxon>
        <taxon>Bacillales</taxon>
        <taxon>Bacillaceae</taxon>
        <taxon>Bacillus</taxon>
    </lineage>
</organism>
<gene>
    <name type="primary">yurM</name>
    <name type="ordered locus">BSU32580</name>
</gene>
<feature type="chain" id="PRO_0000060276" description="Probable ABC transporter permease protein YurM">
    <location>
        <begin position="1"/>
        <end position="300"/>
    </location>
</feature>
<feature type="transmembrane region" description="Helical" evidence="1">
    <location>
        <begin position="37"/>
        <end position="57"/>
    </location>
</feature>
<feature type="transmembrane region" description="Helical" evidence="1">
    <location>
        <begin position="98"/>
        <end position="118"/>
    </location>
</feature>
<feature type="transmembrane region" description="Helical" evidence="1">
    <location>
        <begin position="129"/>
        <end position="149"/>
    </location>
</feature>
<feature type="transmembrane region" description="Helical" evidence="1">
    <location>
        <begin position="161"/>
        <end position="181"/>
    </location>
</feature>
<feature type="transmembrane region" description="Helical" evidence="1">
    <location>
        <begin position="204"/>
        <end position="224"/>
    </location>
</feature>
<feature type="transmembrane region" description="Helical" evidence="1">
    <location>
        <begin position="264"/>
        <end position="284"/>
    </location>
</feature>
<feature type="domain" description="ABC transmembrane type-1" evidence="1">
    <location>
        <begin position="94"/>
        <end position="285"/>
    </location>
</feature>
<name>YURM_BACSU</name>